<name>Y967_HAEIN</name>
<protein>
    <recommendedName>
        <fullName>Uncharacterized protein HI_0967</fullName>
    </recommendedName>
</protein>
<sequence>MQNSSNIFTTDKAANEFSFPDLKNFRYNDRTFLR</sequence>
<accession>P44086</accession>
<feature type="chain" id="PRO_0000077983" description="Uncharacterized protein HI_0967">
    <location>
        <begin position="1"/>
        <end position="34"/>
    </location>
</feature>
<gene>
    <name type="ordered locus">HI_0967</name>
</gene>
<keyword id="KW-1185">Reference proteome</keyword>
<organism>
    <name type="scientific">Haemophilus influenzae (strain ATCC 51907 / DSM 11121 / KW20 / Rd)</name>
    <dbReference type="NCBI Taxonomy" id="71421"/>
    <lineage>
        <taxon>Bacteria</taxon>
        <taxon>Pseudomonadati</taxon>
        <taxon>Pseudomonadota</taxon>
        <taxon>Gammaproteobacteria</taxon>
        <taxon>Pasteurellales</taxon>
        <taxon>Pasteurellaceae</taxon>
        <taxon>Haemophilus</taxon>
    </lineage>
</organism>
<dbReference type="EMBL" id="L42023">
    <property type="protein sequence ID" value="AAC22630.1"/>
    <property type="molecule type" value="Genomic_DNA"/>
</dbReference>
<dbReference type="PIR" id="E64017">
    <property type="entry name" value="E64017"/>
</dbReference>
<dbReference type="RefSeq" id="NP_439128.1">
    <property type="nucleotide sequence ID" value="NC_000907.1"/>
</dbReference>
<dbReference type="EnsemblBacteria" id="AAC22630">
    <property type="protein sequence ID" value="AAC22630"/>
    <property type="gene ID" value="HI_0967"/>
</dbReference>
<dbReference type="KEGG" id="hin:HI_0967"/>
<dbReference type="HOGENOM" id="CLU_3374029_0_0_6"/>
<dbReference type="OrthoDB" id="9863956at2"/>
<dbReference type="BioCyc" id="HINF71421:G1GJ1-1008-MONOMER"/>
<dbReference type="Proteomes" id="UP000000579">
    <property type="component" value="Chromosome"/>
</dbReference>
<proteinExistence type="predicted"/>
<reference key="1">
    <citation type="journal article" date="1995" name="Science">
        <title>Whole-genome random sequencing and assembly of Haemophilus influenzae Rd.</title>
        <authorList>
            <person name="Fleischmann R.D."/>
            <person name="Adams M.D."/>
            <person name="White O."/>
            <person name="Clayton R.A."/>
            <person name="Kirkness E.F."/>
            <person name="Kerlavage A.R."/>
            <person name="Bult C.J."/>
            <person name="Tomb J.-F."/>
            <person name="Dougherty B.A."/>
            <person name="Merrick J.M."/>
            <person name="McKenney K."/>
            <person name="Sutton G.G."/>
            <person name="FitzHugh W."/>
            <person name="Fields C.A."/>
            <person name="Gocayne J.D."/>
            <person name="Scott J.D."/>
            <person name="Shirley R."/>
            <person name="Liu L.-I."/>
            <person name="Glodek A."/>
            <person name="Kelley J.M."/>
            <person name="Weidman J.F."/>
            <person name="Phillips C.A."/>
            <person name="Spriggs T."/>
            <person name="Hedblom E."/>
            <person name="Cotton M.D."/>
            <person name="Utterback T.R."/>
            <person name="Hanna M.C."/>
            <person name="Nguyen D.T."/>
            <person name="Saudek D.M."/>
            <person name="Brandon R.C."/>
            <person name="Fine L.D."/>
            <person name="Fritchman J.L."/>
            <person name="Fuhrmann J.L."/>
            <person name="Geoghagen N.S.M."/>
            <person name="Gnehm C.L."/>
            <person name="McDonald L.A."/>
            <person name="Small K.V."/>
            <person name="Fraser C.M."/>
            <person name="Smith H.O."/>
            <person name="Venter J.C."/>
        </authorList>
    </citation>
    <scope>NUCLEOTIDE SEQUENCE [LARGE SCALE GENOMIC DNA]</scope>
    <source>
        <strain>ATCC 51907 / DSM 11121 / KW20 / Rd</strain>
    </source>
</reference>